<accession>Q03841</accession>
<evidence type="ECO:0000305" key="1"/>
<name>FLAA_RHIME</name>
<organism>
    <name type="scientific">Rhizobium meliloti (strain 1021)</name>
    <name type="common">Ensifer meliloti</name>
    <name type="synonym">Sinorhizobium meliloti</name>
    <dbReference type="NCBI Taxonomy" id="266834"/>
    <lineage>
        <taxon>Bacteria</taxon>
        <taxon>Pseudomonadati</taxon>
        <taxon>Pseudomonadota</taxon>
        <taxon>Alphaproteobacteria</taxon>
        <taxon>Hyphomicrobiales</taxon>
        <taxon>Rhizobiaceae</taxon>
        <taxon>Sinorhizobium/Ensifer group</taxon>
        <taxon>Sinorhizobium</taxon>
    </lineage>
</organism>
<keyword id="KW-0975">Bacterial flagellum</keyword>
<keyword id="KW-1185">Reference proteome</keyword>
<keyword id="KW-0964">Secreted</keyword>
<feature type="chain" id="PRO_0000182621" description="Flagellin A">
    <location>
        <begin position="1"/>
        <end position="394"/>
    </location>
</feature>
<dbReference type="EMBL" id="M57565">
    <property type="protein sequence ID" value="AAA26279.1"/>
    <property type="molecule type" value="Genomic_DNA"/>
</dbReference>
<dbReference type="EMBL" id="AL591688">
    <property type="protein sequence ID" value="CAC45241.1"/>
    <property type="molecule type" value="Genomic_DNA"/>
</dbReference>
<dbReference type="PIR" id="A39436">
    <property type="entry name" value="A39436"/>
</dbReference>
<dbReference type="RefSeq" id="NP_384775.1">
    <property type="nucleotide sequence ID" value="NC_003047.1"/>
</dbReference>
<dbReference type="RefSeq" id="WP_010968736.1">
    <property type="nucleotide sequence ID" value="NC_003047.1"/>
</dbReference>
<dbReference type="SMR" id="Q03841"/>
<dbReference type="EnsemblBacteria" id="CAC45241">
    <property type="protein sequence ID" value="CAC45241"/>
    <property type="gene ID" value="SMc03037"/>
</dbReference>
<dbReference type="KEGG" id="sme:SMc03037"/>
<dbReference type="PATRIC" id="fig|266834.11.peg.2043"/>
<dbReference type="eggNOG" id="COG1344">
    <property type="taxonomic scope" value="Bacteria"/>
</dbReference>
<dbReference type="HOGENOM" id="CLU_011142_1_0_5"/>
<dbReference type="OrthoDB" id="8328560at2"/>
<dbReference type="Proteomes" id="UP000001976">
    <property type="component" value="Chromosome"/>
</dbReference>
<dbReference type="GO" id="GO:0009288">
    <property type="term" value="C:bacterial-type flagellum"/>
    <property type="evidence" value="ECO:0007669"/>
    <property type="project" value="UniProtKB-SubCell"/>
</dbReference>
<dbReference type="GO" id="GO:0005576">
    <property type="term" value="C:extracellular region"/>
    <property type="evidence" value="ECO:0007669"/>
    <property type="project" value="UniProtKB-SubCell"/>
</dbReference>
<dbReference type="GO" id="GO:0005198">
    <property type="term" value="F:structural molecule activity"/>
    <property type="evidence" value="ECO:0007669"/>
    <property type="project" value="InterPro"/>
</dbReference>
<dbReference type="Gene3D" id="1.20.1330.10">
    <property type="entry name" value="f41 fragment of flagellin, N-terminal domain"/>
    <property type="match status" value="1"/>
</dbReference>
<dbReference type="InterPro" id="IPR001492">
    <property type="entry name" value="Flagellin"/>
</dbReference>
<dbReference type="InterPro" id="IPR046358">
    <property type="entry name" value="Flagellin_C"/>
</dbReference>
<dbReference type="InterPro" id="IPR001029">
    <property type="entry name" value="Flagellin_N"/>
</dbReference>
<dbReference type="PANTHER" id="PTHR42792">
    <property type="entry name" value="FLAGELLIN"/>
    <property type="match status" value="1"/>
</dbReference>
<dbReference type="PANTHER" id="PTHR42792:SF2">
    <property type="entry name" value="FLAGELLIN"/>
    <property type="match status" value="1"/>
</dbReference>
<dbReference type="Pfam" id="PF00700">
    <property type="entry name" value="Flagellin_C"/>
    <property type="match status" value="1"/>
</dbReference>
<dbReference type="Pfam" id="PF00669">
    <property type="entry name" value="Flagellin_N"/>
    <property type="match status" value="1"/>
</dbReference>
<dbReference type="PRINTS" id="PR00207">
    <property type="entry name" value="FLAGELLIN"/>
</dbReference>
<dbReference type="SUPFAM" id="SSF64518">
    <property type="entry name" value="Phase 1 flagellin"/>
    <property type="match status" value="1"/>
</dbReference>
<reference key="1">
    <citation type="journal article" date="1991" name="J. Bacteriol.">
        <title>Mutations in the two flagellin genes of Rhizobium meliloti.</title>
        <authorList>
            <person name="Bergman K."/>
            <person name="Nulty E."/>
            <person name="Su L."/>
        </authorList>
    </citation>
    <scope>NUCLEOTIDE SEQUENCE [GENOMIC DNA]</scope>
    <source>
        <strain>1021</strain>
    </source>
</reference>
<reference key="2">
    <citation type="journal article" date="2001" name="Proc. Natl. Acad. Sci. U.S.A.">
        <title>Analysis of the chromosome sequence of the legume symbiont Sinorhizobium meliloti strain 1021.</title>
        <authorList>
            <person name="Capela D."/>
            <person name="Barloy-Hubler F."/>
            <person name="Gouzy J."/>
            <person name="Bothe G."/>
            <person name="Ampe F."/>
            <person name="Batut J."/>
            <person name="Boistard P."/>
            <person name="Becker A."/>
            <person name="Boutry M."/>
            <person name="Cadieu E."/>
            <person name="Dreano S."/>
            <person name="Gloux S."/>
            <person name="Godrie T."/>
            <person name="Goffeau A."/>
            <person name="Kahn D."/>
            <person name="Kiss E."/>
            <person name="Lelaure V."/>
            <person name="Masuy D."/>
            <person name="Pohl T."/>
            <person name="Portetelle D."/>
            <person name="Puehler A."/>
            <person name="Purnelle B."/>
            <person name="Ramsperger U."/>
            <person name="Renard C."/>
            <person name="Thebault P."/>
            <person name="Vandenbol M."/>
            <person name="Weidner S."/>
            <person name="Galibert F."/>
        </authorList>
    </citation>
    <scope>NUCLEOTIDE SEQUENCE [LARGE SCALE GENOMIC DNA]</scope>
    <source>
        <strain>1021</strain>
    </source>
</reference>
<reference key="3">
    <citation type="journal article" date="2001" name="Science">
        <title>The composite genome of the legume symbiont Sinorhizobium meliloti.</title>
        <authorList>
            <person name="Galibert F."/>
            <person name="Finan T.M."/>
            <person name="Long S.R."/>
            <person name="Puehler A."/>
            <person name="Abola P."/>
            <person name="Ampe F."/>
            <person name="Barloy-Hubler F."/>
            <person name="Barnett M.J."/>
            <person name="Becker A."/>
            <person name="Boistard P."/>
            <person name="Bothe G."/>
            <person name="Boutry M."/>
            <person name="Bowser L."/>
            <person name="Buhrmester J."/>
            <person name="Cadieu E."/>
            <person name="Capela D."/>
            <person name="Chain P."/>
            <person name="Cowie A."/>
            <person name="Davis R.W."/>
            <person name="Dreano S."/>
            <person name="Federspiel N.A."/>
            <person name="Fisher R.F."/>
            <person name="Gloux S."/>
            <person name="Godrie T."/>
            <person name="Goffeau A."/>
            <person name="Golding B."/>
            <person name="Gouzy J."/>
            <person name="Gurjal M."/>
            <person name="Hernandez-Lucas I."/>
            <person name="Hong A."/>
            <person name="Huizar L."/>
            <person name="Hyman R.W."/>
            <person name="Jones T."/>
            <person name="Kahn D."/>
            <person name="Kahn M.L."/>
            <person name="Kalman S."/>
            <person name="Keating D.H."/>
            <person name="Kiss E."/>
            <person name="Komp C."/>
            <person name="Lelaure V."/>
            <person name="Masuy D."/>
            <person name="Palm C."/>
            <person name="Peck M.C."/>
            <person name="Pohl T.M."/>
            <person name="Portetelle D."/>
            <person name="Purnelle B."/>
            <person name="Ramsperger U."/>
            <person name="Surzycki R."/>
            <person name="Thebault P."/>
            <person name="Vandenbol M."/>
            <person name="Vorhoelter F.J."/>
            <person name="Weidner S."/>
            <person name="Wells D.H."/>
            <person name="Wong K."/>
            <person name="Yeh K.-C."/>
            <person name="Batut J."/>
        </authorList>
    </citation>
    <scope>NUCLEOTIDE SEQUENCE [LARGE SCALE GENOMIC DNA]</scope>
    <source>
        <strain>1021</strain>
    </source>
</reference>
<protein>
    <recommendedName>
        <fullName>Flagellin A</fullName>
    </recommendedName>
</protein>
<proteinExistence type="inferred from homology"/>
<sequence length="394" mass="40718">MTSILTNNSAMAALSTLRSISSSMEDTQSRISSGLRVGSASDNAAYWSIATTMRSDNQALSAVQDALGLGAAKVDTAYSGMESAIEVVKEIKAKLVAATEDGVDKAKIQEEITQLKDQLTSIAEAASFSGENWLQADLSGGPVTKSVVGGFVRDSSGAVSVKKVDYSLNTDTVLFDTTGNTGILDKVYNVSQASVTLPVNVNGTTSEYTVGAYNVDDLIDASATFDGDYANVGAGALAGDYVKVQGSWVKAVDVAATGQEVVYDDGTTKWGVDTTVTGAPATNVAAPASIATIDITIAAQAGNLDALIAGVDEALTDMTSAAASLGSISSRIDLQSDFVNKLSDSIDSGVGRLVDADMNEESTRLKALQTQQQLAIQALSIANSDSQNVLSLFR</sequence>
<gene>
    <name type="primary">flaA</name>
    <name type="ordered locus">R00669</name>
    <name type="ORF">SMc03037</name>
</gene>
<comment type="function">
    <text>Flagellin is the subunit protein which polymerizes to form the filaments of bacterial flagella. Homomer of FlaA is able to form a functional filament.</text>
</comment>
<comment type="subcellular location">
    <subcellularLocation>
        <location>Secreted</location>
    </subcellularLocation>
    <subcellularLocation>
        <location>Bacterial flagellum</location>
    </subcellularLocation>
</comment>
<comment type="similarity">
    <text evidence="1">Belongs to the bacterial flagellin family.</text>
</comment>